<sequence>MSTAVNVPSAVRPADKRPIASFHPSPWGDYFLKYVPCDQVTQAKMEDEVKKVEEDVKKELRKLAKAVGKPLELLNFIDVVERLGVGYRLEQEIEDLVQAIFDNDKFGVDEFDLYHTSLWFRLLRQHGFHVSCDVFGKFKGRNGRFKDSLASDVKGILGLYEASHVRTHGDDTLDEALVFTTTHLKAVVTNQPNHPLVPQVTHALMQPYHKGMPRLESRHFIAFYEKDPYHDKTLLKFGKLDFNLVQALHKKELKDLSRWWKDLDMHAKMPFPSRDRVPEGYFWTLGPFYEPQFALCRKFFLQVFKVTSIVDDIYDAYGTIDELTAFTKAAERWDRSCLDELPEYMKVSYASLIDTFEEFERDLAPQGRSWSVKYAREEMIQMCRVYYQEAKWCHEKYSPTCDEYLEKASIVSFGYNLGTVVCFLGMGDVATKEAFEWARGNPKVVRAAGIIGRLMDDIGSHHFEQGRDHVPSAVECYIRQHGVDEVTAQRELGKRVESSWKDINEMMLKPYMMPKPLLTRILNECRIVDVIYKGEDSYTFSNTTMKKNISHILTDPIPI</sequence>
<protein>
    <recommendedName>
        <fullName evidence="3">(-)-drimenol synthase</fullName>
        <shortName evidence="3">PhDS</shortName>
        <ecNumber evidence="2">4.2.3.194</ecNumber>
    </recommendedName>
    <alternativeName>
        <fullName evidence="4">Drimenol cyclase</fullName>
    </alternativeName>
    <alternativeName>
        <fullName evidence="4">Sesquiterpene synthase</fullName>
    </alternativeName>
</protein>
<feature type="chain" id="PRO_0000449919" description="(-)-drimenol synthase">
    <location>
        <begin position="1"/>
        <end position="559"/>
    </location>
</feature>
<feature type="short sequence motif" description="DDXXD motif" evidence="4">
    <location>
        <begin position="311"/>
        <end position="315"/>
    </location>
</feature>
<feature type="binding site" evidence="1">
    <location>
        <position position="311"/>
    </location>
    <ligand>
        <name>Mg(2+)</name>
        <dbReference type="ChEBI" id="CHEBI:18420"/>
        <label>1</label>
    </ligand>
</feature>
<feature type="binding site" evidence="1">
    <location>
        <position position="311"/>
    </location>
    <ligand>
        <name>Mg(2+)</name>
        <dbReference type="ChEBI" id="CHEBI:18420"/>
        <label>2</label>
    </ligand>
</feature>
<feature type="binding site" evidence="1">
    <location>
        <position position="315"/>
    </location>
    <ligand>
        <name>Mg(2+)</name>
        <dbReference type="ChEBI" id="CHEBI:18420"/>
        <label>1</label>
    </ligand>
</feature>
<feature type="binding site" evidence="1">
    <location>
        <position position="315"/>
    </location>
    <ligand>
        <name>Mg(2+)</name>
        <dbReference type="ChEBI" id="CHEBI:18420"/>
        <label>2</label>
    </ligand>
</feature>
<feature type="binding site" evidence="1">
    <location>
        <position position="456"/>
    </location>
    <ligand>
        <name>Mg(2+)</name>
        <dbReference type="ChEBI" id="CHEBI:18420"/>
        <label>3</label>
    </ligand>
</feature>
<feature type="binding site" evidence="1">
    <location>
        <position position="460"/>
    </location>
    <ligand>
        <name>Mg(2+)</name>
        <dbReference type="ChEBI" id="CHEBI:18420"/>
        <label>3</label>
    </ligand>
</feature>
<feature type="binding site" evidence="1">
    <location>
        <position position="464"/>
    </location>
    <ligand>
        <name>Mg(2+)</name>
        <dbReference type="ChEBI" id="CHEBI:18420"/>
        <label>3</label>
    </ligand>
</feature>
<feature type="turn" evidence="6">
    <location>
        <begin position="28"/>
        <end position="33"/>
    </location>
</feature>
<feature type="helix" evidence="6">
    <location>
        <begin position="39"/>
        <end position="65"/>
    </location>
</feature>
<feature type="helix" evidence="6">
    <location>
        <begin position="70"/>
        <end position="82"/>
    </location>
</feature>
<feature type="helix" evidence="6">
    <location>
        <begin position="86"/>
        <end position="89"/>
    </location>
</feature>
<feature type="helix" evidence="6">
    <location>
        <begin position="90"/>
        <end position="102"/>
    </location>
</feature>
<feature type="helix" evidence="6">
    <location>
        <begin position="108"/>
        <end position="110"/>
    </location>
</feature>
<feature type="helix" evidence="6">
    <location>
        <begin position="113"/>
        <end position="125"/>
    </location>
</feature>
<feature type="helix" evidence="6">
    <location>
        <begin position="132"/>
        <end position="138"/>
    </location>
</feature>
<feature type="strand" evidence="6">
    <location>
        <begin position="143"/>
        <end position="145"/>
    </location>
</feature>
<feature type="helix" evidence="6">
    <location>
        <begin position="147"/>
        <end position="151"/>
    </location>
</feature>
<feature type="helix" evidence="6">
    <location>
        <begin position="153"/>
        <end position="162"/>
    </location>
</feature>
<feature type="helix" evidence="6">
    <location>
        <begin position="163"/>
        <end position="165"/>
    </location>
</feature>
<feature type="helix" evidence="6">
    <location>
        <begin position="171"/>
        <end position="190"/>
    </location>
</feature>
<feature type="helix" evidence="6">
    <location>
        <begin position="197"/>
        <end position="205"/>
    </location>
</feature>
<feature type="helix" evidence="6">
    <location>
        <begin position="208"/>
        <end position="210"/>
    </location>
</feature>
<feature type="helix" evidence="6">
    <location>
        <begin position="213"/>
        <end position="225"/>
    </location>
</feature>
<feature type="helix" evidence="6">
    <location>
        <begin position="232"/>
        <end position="264"/>
    </location>
</feature>
<feature type="strand" evidence="6">
    <location>
        <begin position="267"/>
        <end position="269"/>
    </location>
</feature>
<feature type="turn" evidence="6">
    <location>
        <begin position="272"/>
        <end position="275"/>
    </location>
</feature>
<feature type="helix" evidence="6">
    <location>
        <begin position="277"/>
        <end position="285"/>
    </location>
</feature>
<feature type="helix" evidence="6">
    <location>
        <begin position="291"/>
        <end position="293"/>
    </location>
</feature>
<feature type="helix" evidence="6">
    <location>
        <begin position="294"/>
        <end position="315"/>
    </location>
</feature>
<feature type="helix" evidence="6">
    <location>
        <begin position="320"/>
        <end position="332"/>
    </location>
</feature>
<feature type="helix" evidence="6">
    <location>
        <begin position="335"/>
        <end position="339"/>
    </location>
</feature>
<feature type="helix" evidence="6">
    <location>
        <begin position="343"/>
        <end position="345"/>
    </location>
</feature>
<feature type="helix" evidence="6">
    <location>
        <begin position="346"/>
        <end position="363"/>
    </location>
</feature>
<feature type="helix" evidence="6">
    <location>
        <begin position="364"/>
        <end position="366"/>
    </location>
</feature>
<feature type="helix" evidence="6">
    <location>
        <begin position="369"/>
        <end position="371"/>
    </location>
</feature>
<feature type="helix" evidence="6">
    <location>
        <begin position="372"/>
        <end position="394"/>
    </location>
</feature>
<feature type="helix" evidence="6">
    <location>
        <begin position="401"/>
        <end position="407"/>
    </location>
</feature>
<feature type="helix" evidence="6">
    <location>
        <begin position="409"/>
        <end position="413"/>
    </location>
</feature>
<feature type="helix" evidence="6">
    <location>
        <begin position="415"/>
        <end position="424"/>
    </location>
</feature>
<feature type="helix" evidence="6">
    <location>
        <begin position="427"/>
        <end position="429"/>
    </location>
</feature>
<feature type="helix" evidence="6">
    <location>
        <begin position="432"/>
        <end position="439"/>
    </location>
</feature>
<feature type="helix" evidence="6">
    <location>
        <begin position="443"/>
        <end position="460"/>
    </location>
</feature>
<feature type="helix" evidence="6">
    <location>
        <begin position="463"/>
        <end position="465"/>
    </location>
</feature>
<feature type="helix" evidence="6">
    <location>
        <begin position="473"/>
        <end position="481"/>
    </location>
</feature>
<feature type="helix" evidence="6">
    <location>
        <begin position="485"/>
        <end position="506"/>
    </location>
</feature>
<feature type="strand" evidence="6">
    <location>
        <begin position="508"/>
        <end position="510"/>
    </location>
</feature>
<feature type="helix" evidence="6">
    <location>
        <begin position="515"/>
        <end position="531"/>
    </location>
</feature>
<feature type="strand" evidence="6">
    <location>
        <begin position="540"/>
        <end position="542"/>
    </location>
</feature>
<feature type="helix" evidence="6">
    <location>
        <begin position="543"/>
        <end position="553"/>
    </location>
</feature>
<keyword id="KW-0002">3D-structure</keyword>
<keyword id="KW-0456">Lyase</keyword>
<keyword id="KW-0460">Magnesium</keyword>
<keyword id="KW-0479">Metal-binding</keyword>
<organism>
    <name type="scientific">Persicaria hydropiper</name>
    <name type="common">Marshpepper knotweed</name>
    <name type="synonym">Polygonum hydropiper</name>
    <dbReference type="NCBI Taxonomy" id="46901"/>
    <lineage>
        <taxon>Eukaryota</taxon>
        <taxon>Viridiplantae</taxon>
        <taxon>Streptophyta</taxon>
        <taxon>Embryophyta</taxon>
        <taxon>Tracheophyta</taxon>
        <taxon>Spermatophyta</taxon>
        <taxon>Magnoliopsida</taxon>
        <taxon>eudicotyledons</taxon>
        <taxon>Gunneridae</taxon>
        <taxon>Pentapetalae</taxon>
        <taxon>Caryophyllales</taxon>
        <taxon>Polygonaceae</taxon>
        <taxon>Polygonoideae</taxon>
        <taxon>Persicarieae</taxon>
        <taxon>Persicaria</taxon>
    </lineage>
</organism>
<reference key="1">
    <citation type="journal article" date="2017" name="Plant J.">
        <title>Identification of a drimenol synthase and drimenol oxidase from Persicaria hydropiper, involved in the biosynthesis of insect deterrent drimanes.</title>
        <authorList>
            <person name="Henquet M.G.L."/>
            <person name="Prota N."/>
            <person name="van der Hooft J.J.J."/>
            <person name="Varbanova-Herde M."/>
            <person name="Hulzink R.J.M."/>
            <person name="de Vos M."/>
            <person name="Prins M."/>
            <person name="de Both M.T.J."/>
            <person name="Franssen M.C.R."/>
            <person name="Bouwmeester H."/>
            <person name="Jongsma M."/>
        </authorList>
    </citation>
    <scope>NUCLEOTIDE SEQUENCE [MRNA]</scope>
    <scope>FUNCTION</scope>
    <scope>CATALYTIC ACTIVITY</scope>
</reference>
<name>DS_PERHD</name>
<comment type="function">
    <text evidence="2 5">Catalyzes the conversion of (2E,6E)-farnesyl diphosphate (FPP) into drimenol, a precursor of the sesquiterpenoid polygodial (PubMed:28258968). Polygodial has been shown to be an antifeedant for a number of herbivorous insects (Probable).</text>
</comment>
<comment type="catalytic activity">
    <reaction evidence="2">
        <text>(2E,6E)-farnesyl diphosphate + H2O = (5S,9S,10S)-drim-7-en-11-ol + diphosphate</text>
        <dbReference type="Rhea" id="RHEA:28290"/>
        <dbReference type="ChEBI" id="CHEBI:15377"/>
        <dbReference type="ChEBI" id="CHEBI:33019"/>
        <dbReference type="ChEBI" id="CHEBI:61148"/>
        <dbReference type="ChEBI" id="CHEBI:175763"/>
        <dbReference type="EC" id="4.2.3.194"/>
    </reaction>
    <physiologicalReaction direction="left-to-right" evidence="2">
        <dbReference type="Rhea" id="RHEA:28291"/>
    </physiologicalReaction>
</comment>
<comment type="cofactor">
    <cofactor evidence="1">
        <name>Mg(2+)</name>
        <dbReference type="ChEBI" id="CHEBI:18420"/>
    </cofactor>
    <text evidence="1">Binds 3 Mg(2+) ions per subunit.</text>
</comment>
<comment type="pathway">
    <text evidence="4">Secondary metabolite biosynthesis; terpenoid biosynthesis.</text>
</comment>
<comment type="domain">
    <text evidence="5">The Asp-Asp-Xaa-Xaa-Asp/Glu (DDXXD/E) motif is important for the catalytic activity, presumably through binding to Mg(2+).</text>
</comment>
<comment type="similarity">
    <text evidence="4">Belongs to the terpene synthase family.</text>
</comment>
<dbReference type="EC" id="4.2.3.194" evidence="2"/>
<dbReference type="EMBL" id="KC754968">
    <property type="protein sequence ID" value="AHF22834.1"/>
    <property type="molecule type" value="mRNA"/>
</dbReference>
<dbReference type="PDB" id="7CJY">
    <property type="method" value="X-ray"/>
    <property type="resolution" value="2.20 A"/>
    <property type="chains" value="A/B=19-559"/>
</dbReference>
<dbReference type="PDBsum" id="7CJY"/>
<dbReference type="SMR" id="W0FFD7"/>
<dbReference type="KEGG" id="ag:AHF22834"/>
<dbReference type="BRENDA" id="4.2.3.194">
    <property type="organism ID" value="13328"/>
</dbReference>
<dbReference type="UniPathway" id="UPA00213"/>
<dbReference type="GO" id="GO:0000287">
    <property type="term" value="F:magnesium ion binding"/>
    <property type="evidence" value="ECO:0007669"/>
    <property type="project" value="InterPro"/>
</dbReference>
<dbReference type="GO" id="GO:0010333">
    <property type="term" value="F:terpene synthase activity"/>
    <property type="evidence" value="ECO:0007669"/>
    <property type="project" value="InterPro"/>
</dbReference>
<dbReference type="GO" id="GO:0016102">
    <property type="term" value="P:diterpenoid biosynthetic process"/>
    <property type="evidence" value="ECO:0007669"/>
    <property type="project" value="InterPro"/>
</dbReference>
<dbReference type="CDD" id="cd00684">
    <property type="entry name" value="Terpene_cyclase_plant_C1"/>
    <property type="match status" value="1"/>
</dbReference>
<dbReference type="FunFam" id="1.10.600.10:FF:000007">
    <property type="entry name" value="Isoprene synthase, chloroplastic"/>
    <property type="match status" value="1"/>
</dbReference>
<dbReference type="FunFam" id="1.50.10.130:FF:000001">
    <property type="entry name" value="Isoprene synthase, chloroplastic"/>
    <property type="match status" value="1"/>
</dbReference>
<dbReference type="Gene3D" id="1.10.600.10">
    <property type="entry name" value="Farnesyl Diphosphate Synthase"/>
    <property type="match status" value="1"/>
</dbReference>
<dbReference type="Gene3D" id="1.50.10.130">
    <property type="entry name" value="Terpene synthase, N-terminal domain"/>
    <property type="match status" value="1"/>
</dbReference>
<dbReference type="InterPro" id="IPR008949">
    <property type="entry name" value="Isoprenoid_synthase_dom_sf"/>
</dbReference>
<dbReference type="InterPro" id="IPR034741">
    <property type="entry name" value="Terpene_cyclase-like_1_C"/>
</dbReference>
<dbReference type="InterPro" id="IPR044814">
    <property type="entry name" value="Terpene_cyclase_plant_C1"/>
</dbReference>
<dbReference type="InterPro" id="IPR001906">
    <property type="entry name" value="Terpene_synth_N"/>
</dbReference>
<dbReference type="InterPro" id="IPR036965">
    <property type="entry name" value="Terpene_synth_N_sf"/>
</dbReference>
<dbReference type="InterPro" id="IPR050148">
    <property type="entry name" value="Terpene_synthase-like"/>
</dbReference>
<dbReference type="InterPro" id="IPR005630">
    <property type="entry name" value="Terpene_synthase_metal-bd"/>
</dbReference>
<dbReference type="InterPro" id="IPR008930">
    <property type="entry name" value="Terpenoid_cyclase/PrenylTrfase"/>
</dbReference>
<dbReference type="PANTHER" id="PTHR31225:SF221">
    <property type="entry name" value="(-)-GERMACRENE D SYNTHASE"/>
    <property type="match status" value="1"/>
</dbReference>
<dbReference type="PANTHER" id="PTHR31225">
    <property type="entry name" value="OS04G0344100 PROTEIN-RELATED"/>
    <property type="match status" value="1"/>
</dbReference>
<dbReference type="Pfam" id="PF01397">
    <property type="entry name" value="Terpene_synth"/>
    <property type="match status" value="1"/>
</dbReference>
<dbReference type="Pfam" id="PF03936">
    <property type="entry name" value="Terpene_synth_C"/>
    <property type="match status" value="1"/>
</dbReference>
<dbReference type="SFLD" id="SFLDS00005">
    <property type="entry name" value="Isoprenoid_Synthase_Type_I"/>
    <property type="match status" value="1"/>
</dbReference>
<dbReference type="SFLD" id="SFLDG01019">
    <property type="entry name" value="Terpene_Cyclase_Like_1_C_Termi"/>
    <property type="match status" value="1"/>
</dbReference>
<dbReference type="SUPFAM" id="SSF48239">
    <property type="entry name" value="Terpenoid cyclases/Protein prenyltransferases"/>
    <property type="match status" value="1"/>
</dbReference>
<dbReference type="SUPFAM" id="SSF48576">
    <property type="entry name" value="Terpenoid synthases"/>
    <property type="match status" value="1"/>
</dbReference>
<proteinExistence type="evidence at protein level"/>
<accession>W0FFD7</accession>
<evidence type="ECO:0000250" key="1">
    <source>
        <dbReference type="UniProtKB" id="Q40577"/>
    </source>
</evidence>
<evidence type="ECO:0000269" key="2">
    <source>
    </source>
</evidence>
<evidence type="ECO:0000303" key="3">
    <source>
    </source>
</evidence>
<evidence type="ECO:0000305" key="4"/>
<evidence type="ECO:0000305" key="5">
    <source>
    </source>
</evidence>
<evidence type="ECO:0007829" key="6">
    <source>
        <dbReference type="PDB" id="7CJY"/>
    </source>
</evidence>